<dbReference type="EC" id="2.7.7.7"/>
<dbReference type="EMBL" id="Y13030">
    <property type="protein sequence ID" value="CAA73475.1"/>
    <property type="molecule type" value="Genomic_DNA"/>
</dbReference>
<dbReference type="GO" id="GO:0003677">
    <property type="term" value="F:DNA binding"/>
    <property type="evidence" value="ECO:0007669"/>
    <property type="project" value="UniProtKB-KW"/>
</dbReference>
<dbReference type="GO" id="GO:0003887">
    <property type="term" value="F:DNA-directed DNA polymerase activity"/>
    <property type="evidence" value="ECO:0007669"/>
    <property type="project" value="UniProtKB-KW"/>
</dbReference>
<dbReference type="GO" id="GO:0004519">
    <property type="term" value="F:endonuclease activity"/>
    <property type="evidence" value="ECO:0007669"/>
    <property type="project" value="UniProtKB-KW"/>
</dbReference>
<dbReference type="GO" id="GO:0000166">
    <property type="term" value="F:nucleotide binding"/>
    <property type="evidence" value="ECO:0007669"/>
    <property type="project" value="InterPro"/>
</dbReference>
<dbReference type="GO" id="GO:0006261">
    <property type="term" value="P:DNA-templated DNA replication"/>
    <property type="evidence" value="ECO:0007669"/>
    <property type="project" value="TreeGrafter"/>
</dbReference>
<dbReference type="GO" id="GO:0016539">
    <property type="term" value="P:intein-mediated protein splicing"/>
    <property type="evidence" value="ECO:0007669"/>
    <property type="project" value="InterPro"/>
</dbReference>
<dbReference type="CDD" id="cd05780">
    <property type="entry name" value="DNA_polB_Kod1_like_exo"/>
    <property type="match status" value="1"/>
</dbReference>
<dbReference type="CDD" id="cd00081">
    <property type="entry name" value="Hint"/>
    <property type="match status" value="4"/>
</dbReference>
<dbReference type="FunFam" id="3.30.342.10:FF:000015">
    <property type="entry name" value="DNA polymerase"/>
    <property type="match status" value="1"/>
</dbReference>
<dbReference type="FunFam" id="1.10.132.60:FF:000013">
    <property type="entry name" value="DNA polymerase Pol2"/>
    <property type="match status" value="1"/>
</dbReference>
<dbReference type="Gene3D" id="1.10.132.60">
    <property type="entry name" value="DNA polymerase family B, C-terminal domain"/>
    <property type="match status" value="1"/>
</dbReference>
<dbReference type="Gene3D" id="3.30.342.10">
    <property type="entry name" value="DNA Polymerase, chain B, domain 1"/>
    <property type="match status" value="1"/>
</dbReference>
<dbReference type="Gene3D" id="2.170.16.10">
    <property type="entry name" value="Hedgehog/Intein (Hint) domain"/>
    <property type="match status" value="2"/>
</dbReference>
<dbReference type="Gene3D" id="1.10.287.690">
    <property type="entry name" value="Helix hairpin bin"/>
    <property type="match status" value="2"/>
</dbReference>
<dbReference type="Gene3D" id="3.10.28.10">
    <property type="entry name" value="Homing endonucleases"/>
    <property type="match status" value="2"/>
</dbReference>
<dbReference type="Gene3D" id="1.10.8.1330">
    <property type="entry name" value="Intein homing endonuclease, domain III"/>
    <property type="match status" value="1"/>
</dbReference>
<dbReference type="Gene3D" id="1.10.10.1010">
    <property type="entry name" value="Intein homing endonuclease, domain IV"/>
    <property type="match status" value="1"/>
</dbReference>
<dbReference type="Gene3D" id="3.90.1600.10">
    <property type="entry name" value="Palm domain of DNA polymerase"/>
    <property type="match status" value="3"/>
</dbReference>
<dbReference type="Gene3D" id="3.30.420.10">
    <property type="entry name" value="Ribonuclease H-like superfamily/Ribonuclease H"/>
    <property type="match status" value="1"/>
</dbReference>
<dbReference type="InterPro" id="IPR006172">
    <property type="entry name" value="DNA-dir_DNA_pol_B"/>
</dbReference>
<dbReference type="InterPro" id="IPR006133">
    <property type="entry name" value="DNA-dir_DNA_pol_B_exonuc"/>
</dbReference>
<dbReference type="InterPro" id="IPR006134">
    <property type="entry name" value="DNA-dir_DNA_pol_B_multi_dom"/>
</dbReference>
<dbReference type="InterPro" id="IPR043502">
    <property type="entry name" value="DNA/RNA_pol_sf"/>
</dbReference>
<dbReference type="InterPro" id="IPR042087">
    <property type="entry name" value="DNA_pol_B_thumb"/>
</dbReference>
<dbReference type="InterPro" id="IPR023211">
    <property type="entry name" value="DNA_pol_palm_dom_sf"/>
</dbReference>
<dbReference type="InterPro" id="IPR050240">
    <property type="entry name" value="DNA_pol_type-B"/>
</dbReference>
<dbReference type="InterPro" id="IPR003586">
    <property type="entry name" value="Hint_dom_C"/>
</dbReference>
<dbReference type="InterPro" id="IPR003587">
    <property type="entry name" value="Hint_dom_N"/>
</dbReference>
<dbReference type="InterPro" id="IPR036844">
    <property type="entry name" value="Hint_dom_sf"/>
</dbReference>
<dbReference type="InterPro" id="IPR027434">
    <property type="entry name" value="Homing_endonucl"/>
</dbReference>
<dbReference type="InterPro" id="IPR006142">
    <property type="entry name" value="INTEIN"/>
</dbReference>
<dbReference type="InterPro" id="IPR030934">
    <property type="entry name" value="Intein_C"/>
</dbReference>
<dbReference type="InterPro" id="IPR004042">
    <property type="entry name" value="Intein_endonuc_central"/>
</dbReference>
<dbReference type="InterPro" id="IPR006141">
    <property type="entry name" value="Intein_N"/>
</dbReference>
<dbReference type="InterPro" id="IPR004860">
    <property type="entry name" value="LAGLIDADG_dom"/>
</dbReference>
<dbReference type="InterPro" id="IPR041005">
    <property type="entry name" value="PI-TkoII_IV"/>
</dbReference>
<dbReference type="InterPro" id="IPR012337">
    <property type="entry name" value="RNaseH-like_sf"/>
</dbReference>
<dbReference type="InterPro" id="IPR036397">
    <property type="entry name" value="RNaseH_sf"/>
</dbReference>
<dbReference type="NCBIfam" id="TIGR01443">
    <property type="entry name" value="intein_Cterm"/>
    <property type="match status" value="3"/>
</dbReference>
<dbReference type="NCBIfam" id="TIGR01445">
    <property type="entry name" value="intein_Nterm"/>
    <property type="match status" value="2"/>
</dbReference>
<dbReference type="NCBIfam" id="TIGR00592">
    <property type="entry name" value="pol2"/>
    <property type="match status" value="2"/>
</dbReference>
<dbReference type="PANTHER" id="PTHR10322">
    <property type="entry name" value="DNA POLYMERASE CATALYTIC SUBUNIT"/>
    <property type="match status" value="1"/>
</dbReference>
<dbReference type="PANTHER" id="PTHR10322:SF23">
    <property type="entry name" value="DNA POLYMERASE DELTA CATALYTIC SUBUNIT"/>
    <property type="match status" value="1"/>
</dbReference>
<dbReference type="Pfam" id="PF00136">
    <property type="entry name" value="DNA_pol_B"/>
    <property type="match status" value="3"/>
</dbReference>
<dbReference type="Pfam" id="PF03104">
    <property type="entry name" value="DNA_pol_B_exo1"/>
    <property type="match status" value="1"/>
</dbReference>
<dbReference type="Pfam" id="PF14890">
    <property type="entry name" value="Intein_splicing"/>
    <property type="match status" value="3"/>
</dbReference>
<dbReference type="Pfam" id="PF14528">
    <property type="entry name" value="LAGLIDADG_3"/>
    <property type="match status" value="2"/>
</dbReference>
<dbReference type="Pfam" id="PF18714">
    <property type="entry name" value="PI-TkoII_IV"/>
    <property type="match status" value="1"/>
</dbReference>
<dbReference type="PRINTS" id="PR00379">
    <property type="entry name" value="INTEIN"/>
</dbReference>
<dbReference type="SMART" id="SM00305">
    <property type="entry name" value="HintC"/>
    <property type="match status" value="3"/>
</dbReference>
<dbReference type="SMART" id="SM00306">
    <property type="entry name" value="HintN"/>
    <property type="match status" value="3"/>
</dbReference>
<dbReference type="SMART" id="SM00486">
    <property type="entry name" value="POLBc"/>
    <property type="match status" value="1"/>
</dbReference>
<dbReference type="SUPFAM" id="SSF56672">
    <property type="entry name" value="DNA/RNA polymerases"/>
    <property type="match status" value="3"/>
</dbReference>
<dbReference type="SUPFAM" id="SSF51294">
    <property type="entry name" value="Hedgehog/intein (Hint) domain"/>
    <property type="match status" value="3"/>
</dbReference>
<dbReference type="SUPFAM" id="SSF55608">
    <property type="entry name" value="Homing endonucleases"/>
    <property type="match status" value="2"/>
</dbReference>
<dbReference type="SUPFAM" id="SSF53098">
    <property type="entry name" value="Ribonuclease H-like"/>
    <property type="match status" value="1"/>
</dbReference>
<dbReference type="PROSITE" id="PS50818">
    <property type="entry name" value="INTEIN_C_TER"/>
    <property type="match status" value="3"/>
</dbReference>
<dbReference type="PROSITE" id="PS50819">
    <property type="entry name" value="INTEIN_ENDONUCLEASE"/>
    <property type="match status" value="2"/>
</dbReference>
<dbReference type="PROSITE" id="PS50817">
    <property type="entry name" value="INTEIN_N_TER"/>
    <property type="match status" value="3"/>
</dbReference>
<feature type="chain" id="PRO_0000007353" description="DNA polymerase, 1st part" evidence="1">
    <location>
        <begin position="1"/>
        <end position="409"/>
    </location>
</feature>
<feature type="chain" id="PRO_0000007354" description="Tag pol-1 intein" evidence="1">
    <location>
        <begin position="410"/>
        <end position="769"/>
    </location>
</feature>
<feature type="chain" id="PRO_0000007355" description="DNA polymerase, 2nd part" evidence="1">
    <location>
        <begin position="770"/>
        <end position="855"/>
    </location>
</feature>
<feature type="chain" id="PRO_0000007356" description="Tag pol-2 intein" evidence="1">
    <location>
        <begin position="856"/>
        <end position="1392"/>
    </location>
</feature>
<feature type="chain" id="PRO_0000007357" description="DNA polymerase, 3rd part" evidence="1">
    <location>
        <begin position="1393"/>
        <end position="1441"/>
    </location>
</feature>
<feature type="chain" id="PRO_0000007358" description="Tag pol-3 intein" evidence="1">
    <location>
        <begin position="1442"/>
        <end position="1598"/>
    </location>
</feature>
<feature type="chain" id="PRO_0000007359" description="DNA polymerase, 4th part" evidence="1">
    <location>
        <begin position="1599"/>
        <end position="1829"/>
    </location>
</feature>
<feature type="domain" description="DOD-type homing endonuclease 1" evidence="2">
    <location>
        <begin position="527"/>
        <end position="668"/>
    </location>
</feature>
<feature type="domain" description="DOD-type homing endonuclease 2" evidence="2">
    <location>
        <begin position="1136"/>
        <end position="1269"/>
    </location>
</feature>
<comment type="catalytic activity">
    <reaction>
        <text>DNA(n) + a 2'-deoxyribonucleoside 5'-triphosphate = DNA(n+1) + diphosphate</text>
        <dbReference type="Rhea" id="RHEA:22508"/>
        <dbReference type="Rhea" id="RHEA-COMP:17339"/>
        <dbReference type="Rhea" id="RHEA-COMP:17340"/>
        <dbReference type="ChEBI" id="CHEBI:33019"/>
        <dbReference type="ChEBI" id="CHEBI:61560"/>
        <dbReference type="ChEBI" id="CHEBI:173112"/>
        <dbReference type="EC" id="2.7.7.7"/>
    </reaction>
</comment>
<comment type="PTM">
    <text>This protein undergoes a protein self splicing that involves a post-translational excision of the three intervening regions (inteins) followed by peptide ligation.</text>
</comment>
<comment type="similarity">
    <text evidence="3">Belongs to the DNA polymerase type-B family.</text>
</comment>
<protein>
    <recommendedName>
        <fullName>DNA polymerase</fullName>
        <ecNumber>2.7.7.7</ecNumber>
    </recommendedName>
    <alternativeName>
        <fullName>Pol Tfu</fullName>
    </alternativeName>
    <component>
        <recommendedName>
            <fullName>Tag pol-1 intein</fullName>
        </recommendedName>
        <alternativeName>
            <fullName>Intein I</fullName>
        </alternativeName>
        <alternativeName>
            <fullName>Tsp-TY pol-1</fullName>
        </alternativeName>
    </component>
    <component>
        <recommendedName>
            <fullName>Tag pol-2 intein</fullName>
        </recommendedName>
        <alternativeName>
            <fullName>Intein II</fullName>
        </alternativeName>
        <alternativeName>
            <fullName>Tsp-TY pol-2</fullName>
        </alternativeName>
    </component>
    <component>
        <recommendedName>
            <fullName>Tag pol-3 intein</fullName>
        </recommendedName>
        <alternativeName>
            <fullName>Intein III</fullName>
        </alternativeName>
        <alternativeName>
            <fullName>Tsp-TY pol-3</fullName>
        </alternativeName>
    </component>
</protein>
<evidence type="ECO:0000255" key="1"/>
<evidence type="ECO:0000255" key="2">
    <source>
        <dbReference type="PROSITE-ProRule" id="PRU00273"/>
    </source>
</evidence>
<evidence type="ECO:0000305" key="3"/>
<proteinExistence type="inferred from homology"/>
<gene>
    <name type="primary">pol</name>
</gene>
<reference key="1">
    <citation type="journal article" date="1997" name="Gene">
        <title>Cloning and characterisation of a thermostable alpha-DNA polymerase from the hyperthermophilic archaeon Thermococcus sp. TY.</title>
        <authorList>
            <person name="Niehaus F."/>
            <person name="Frey B."/>
            <person name="Antranikian G."/>
        </authorList>
    </citation>
    <scope>NUCLEOTIDE SEQUENCE [GENOMIC DNA]</scope>
    <source>
        <strain>TY</strain>
    </source>
</reference>
<name>DPOL_THEAG</name>
<sequence>MILDTDYITKDGKPIIRIFKKENGEFKIELDPHFQPYIYALLKDDSAIDEIKAIKGERHGKIVRVVDAVKVKKKFLGRDVEVWKLIFEHPQDVPALRGKIREHPAVIDIYEYDIPFAKRYLIDKGLIPMEGDEELKLMAFDIETFYHEGDEFGKGEIIMISYADEEEARVITWKNIDLPYVDVVSNEREMIKRFVQIVREKDPDVLITYNGDNFDLPYLIKRAEKLGVTLLLGRDKEHPEPKIHRMGDSFAVEIKGRIHFDLFPVVRRTINLPTYTLEAVYEAVLGKTKSKLGAEEIAAIWETEESMKKLAQYSMEDARATYELGKEFFPMEAELAKLIGQSVWDVSRSSTGNLVEWYLLRVAYERNELAPNKPDEEEYRRRLRTTYLGGYVKEPERGLWENIAYLDFRCHPADTKVIVKGKGIVNISDVKEGDYILGIDGWQRVKKVWKYHYEGKLININGLKCTPNHKVPVVTENDRQTRIRDSLAKSFLSGKVKGKIITTKLFEKIAEFEKNKPSEEEILKGELSGIILAEGTLLRKDIEYFDSSRGKKRISHQYRVEITIGENEKELLERILYIFDKLFGIRPSVKKKGDTNALKITTAKKAVYLQIEELLKNIESLYAPAVLRGFFERDATVNKIRSTIVVTQGTNNKWKIDIVAKLLDSLGIPYSRYEYKYIENGKELTKHILEITGRDGLILFQTLVGFISSEKNEALEKAIEVREMNRLKNNSFYNLSTFEVSSEYYKGEVYDLTLEGNPYYFANGILTHNSLYPSIIVTHNVSPDTLEREGCKNYDVAPIVGYKFCKDFPGFIPSILGELITMRQEIKKKMKATIDPIEKKMLDYRQRAVKLLANSILPNEWLPIIENGEVKFVKIGEFIDRYMEEQKDKVRTVDNTEVLEVDNIFAFSLNKESKKSEIKKVKALIRHKYKGEAYEVELNSGRKIHITRGHSLFTIRNGKIKEIWGEEVKVGDLIIVPKKVKLNEKEAVINIPELISKLPDEDTADVVMTTPVKGRKNFFKGMLRTLKWIFGEESKRIRTFNRYLFHLEELGFVKLLPRGYEVTDWEGLKRYRQLYEKLVKNLRYNGNKREYLVRFNDIKDSVSCFPRKELEEWKIGTXKGFRXKCILKVDEDFGKFLGYYVSEGYAGAQKNKTGGMSYSVKLYNENPNVLKDMKNIAEKFFGKVRVGKNCVDIPKKMAYLLAKSLCGVTAENKRIPSIIFDSSEPVRWAFLRAYFVGDGDIHPSKRLRLSTKSELLANQLVFLLNSLGVSSIKIGFDSGVYRVYINEDLPFLQTSRQKNTYYPNLIPKEVLEEIFGRKFQKNITFEKFKELADSGKLDKRKVKLLDFLLNGDIVLDRVKNVEKREYEGYVYDLSVEDNENFLVGFGLLYAHNSYYGYMGYPKARWYSKECAESVTAWGRHYIEMTIKEIEEKFGFKVLYADSVTGDTEIIVKRNGRIEFVPIEKLFERVDYRIGEKEYCILEDVEALTLDNRGKLIWKKVPYVMRHRAKKKVYRIWITNSWYIDVTEDHSLIVAEDGLKEARPMEIEGKSLIATKDDLSGVEYIKPHAIEEISYNGYVYDIEVEGTHRFFANGILVHNTDGFYATIPGEKPETIKKKAKEFLKYINSKLPGLLELEYEGFYLRGFFVAKKRYAVIDEEGRITTRGLEVVRRDWSEIAKETQAKVLEAILKEDSVEKAVEIVKDVVEEIAKYQVPLEKLVIHEQITKDLSEYKAIGPHVAIAKRLAAKGIKVRPGTIISYIVLRGSGKISDRVILLSEYDPKKHKYDPDYYIENQVLPAVLRILEAFGYRKEDLKYQSSKQVGLDAWLKK</sequence>
<organism>
    <name type="scientific">Thermococcus aggregans</name>
    <dbReference type="NCBI Taxonomy" id="110163"/>
    <lineage>
        <taxon>Archaea</taxon>
        <taxon>Methanobacteriati</taxon>
        <taxon>Methanobacteriota</taxon>
        <taxon>Thermococci</taxon>
        <taxon>Thermococcales</taxon>
        <taxon>Thermococcaceae</taxon>
        <taxon>Thermococcus</taxon>
    </lineage>
</organism>
<keyword id="KW-0068">Autocatalytic cleavage</keyword>
<keyword id="KW-0235">DNA replication</keyword>
<keyword id="KW-0238">DNA-binding</keyword>
<keyword id="KW-0239">DNA-directed DNA polymerase</keyword>
<keyword id="KW-0255">Endonuclease</keyword>
<keyword id="KW-0378">Hydrolase</keyword>
<keyword id="KW-0540">Nuclease</keyword>
<keyword id="KW-0548">Nucleotidyltransferase</keyword>
<keyword id="KW-0651">Protein splicing</keyword>
<keyword id="KW-0677">Repeat</keyword>
<keyword id="KW-0808">Transferase</keyword>
<accession>O33845</accession>